<protein>
    <recommendedName>
        <fullName>rRNA-processing protein FCF1 homolog</fullName>
    </recommendedName>
</protein>
<gene>
    <name type="primary">FCF1</name>
</gene>
<name>FCF1_PONAB</name>
<accession>Q5RFQ0</accession>
<sequence>MGKQKKTRKYATMKRMLSLRDQRLKEKDRLKPKKKEKKDPSALKEREVPQHPSCLFFQYNTQLGPPYHILVDTNFINFSIKAKLDLVQSMMDCLYAKCIPCITDCVMAEIEKLGQKYRVALRIAKDPRFERLPCTHKGTYADDCLVQRVTQHKCYIVATVDRDLKRRIRKIPGVPIMYISNHRYNIERMPDDYGAPRF</sequence>
<reference key="1">
    <citation type="submission" date="2004-11" db="EMBL/GenBank/DDBJ databases">
        <authorList>
            <consortium name="The German cDNA consortium"/>
        </authorList>
    </citation>
    <scope>NUCLEOTIDE SEQUENCE [LARGE SCALE MRNA]</scope>
    <source>
        <tissue>Kidney</tissue>
    </source>
</reference>
<proteinExistence type="evidence at transcript level"/>
<dbReference type="EMBL" id="CR857102">
    <property type="protein sequence ID" value="CAH89407.1"/>
    <property type="molecule type" value="mRNA"/>
</dbReference>
<dbReference type="RefSeq" id="NP_001124593.1">
    <property type="nucleotide sequence ID" value="NM_001131121.1"/>
</dbReference>
<dbReference type="SMR" id="Q5RFQ0"/>
<dbReference type="FunCoup" id="Q5RFQ0">
    <property type="interactions" value="3083"/>
</dbReference>
<dbReference type="STRING" id="9601.ENSPPYP00000006810"/>
<dbReference type="Ensembl" id="ENSPPYT00000007079.2">
    <property type="protein sequence ID" value="ENSPPYP00000006810.2"/>
    <property type="gene ID" value="ENSPPYG00000005991.2"/>
</dbReference>
<dbReference type="GeneID" id="100171429"/>
<dbReference type="KEGG" id="pon:100171429"/>
<dbReference type="CTD" id="51077"/>
<dbReference type="eggNOG" id="KOG3165">
    <property type="taxonomic scope" value="Eukaryota"/>
</dbReference>
<dbReference type="GeneTree" id="ENSGT00940000153117"/>
<dbReference type="HOGENOM" id="CLU_081098_0_1_1"/>
<dbReference type="InParanoid" id="Q5RFQ0"/>
<dbReference type="OMA" id="GMMDCLL"/>
<dbReference type="OrthoDB" id="76105at2759"/>
<dbReference type="Proteomes" id="UP000001595">
    <property type="component" value="Chromosome 14"/>
</dbReference>
<dbReference type="GO" id="GO:0005730">
    <property type="term" value="C:nucleolus"/>
    <property type="evidence" value="ECO:0007669"/>
    <property type="project" value="UniProtKB-SubCell"/>
</dbReference>
<dbReference type="GO" id="GO:0032040">
    <property type="term" value="C:small-subunit processome"/>
    <property type="evidence" value="ECO:0000250"/>
    <property type="project" value="UniProtKB"/>
</dbReference>
<dbReference type="GO" id="GO:0000480">
    <property type="term" value="P:endonucleolytic cleavage in 5'-ETS of tricistronic rRNA transcript (SSU-rRNA, 5.8S rRNA, LSU-rRNA)"/>
    <property type="evidence" value="ECO:0007669"/>
    <property type="project" value="Ensembl"/>
</dbReference>
<dbReference type="GO" id="GO:0000447">
    <property type="term" value="P:endonucleolytic cleavage in ITS1 to separate SSU-rRNA from 5.8S rRNA and LSU-rRNA from tricistronic rRNA transcript (SSU-rRNA, 5.8S rRNA, LSU-rRNA)"/>
    <property type="evidence" value="ECO:0007669"/>
    <property type="project" value="Ensembl"/>
</dbReference>
<dbReference type="GO" id="GO:0042274">
    <property type="term" value="P:ribosomal small subunit biogenesis"/>
    <property type="evidence" value="ECO:0000250"/>
    <property type="project" value="UniProtKB"/>
</dbReference>
<dbReference type="CDD" id="cd09864">
    <property type="entry name" value="PIN_Fcf1-like"/>
    <property type="match status" value="1"/>
</dbReference>
<dbReference type="FunFam" id="3.40.50.1010:FF:000004">
    <property type="entry name" value="rRNA-processing protein FCF1 homolog"/>
    <property type="match status" value="1"/>
</dbReference>
<dbReference type="Gene3D" id="3.40.50.1010">
    <property type="entry name" value="5'-nuclease"/>
    <property type="match status" value="1"/>
</dbReference>
<dbReference type="InterPro" id="IPR006984">
    <property type="entry name" value="Fcf1/Utp23"/>
</dbReference>
<dbReference type="InterPro" id="IPR037503">
    <property type="entry name" value="Fcf1_PIN"/>
</dbReference>
<dbReference type="InterPro" id="IPR029060">
    <property type="entry name" value="PIN-like_dom_sf"/>
</dbReference>
<dbReference type="InterPro" id="IPR002716">
    <property type="entry name" value="PIN_dom"/>
</dbReference>
<dbReference type="PANTHER" id="PTHR12416">
    <property type="entry name" value="RRNA-PROCESSING PROTEIN UTP23 HOMOLOG"/>
    <property type="match status" value="1"/>
</dbReference>
<dbReference type="Pfam" id="PF04900">
    <property type="entry name" value="Fcf1"/>
    <property type="match status" value="1"/>
</dbReference>
<dbReference type="SMART" id="SM00670">
    <property type="entry name" value="PINc"/>
    <property type="match status" value="1"/>
</dbReference>
<dbReference type="SUPFAM" id="SSF88723">
    <property type="entry name" value="PIN domain-like"/>
    <property type="match status" value="1"/>
</dbReference>
<feature type="chain" id="PRO_0000089922" description="rRNA-processing protein FCF1 homolog">
    <location>
        <begin position="1"/>
        <end position="198"/>
    </location>
</feature>
<feature type="domain" description="PINc">
    <location>
        <begin position="67"/>
        <end position="166"/>
    </location>
</feature>
<feature type="region of interest" description="Disordered" evidence="2">
    <location>
        <begin position="22"/>
        <end position="47"/>
    </location>
</feature>
<feature type="compositionally biased region" description="Basic and acidic residues" evidence="2">
    <location>
        <begin position="37"/>
        <end position="47"/>
    </location>
</feature>
<keyword id="KW-0539">Nucleus</keyword>
<keyword id="KW-1185">Reference proteome</keyword>
<keyword id="KW-0690">Ribosome biogenesis</keyword>
<keyword id="KW-0698">rRNA processing</keyword>
<evidence type="ECO:0000250" key="1">
    <source>
        <dbReference type="UniProtKB" id="Q9Y324"/>
    </source>
</evidence>
<evidence type="ECO:0000256" key="2">
    <source>
        <dbReference type="SAM" id="MobiDB-lite"/>
    </source>
</evidence>
<evidence type="ECO:0000305" key="3"/>
<organism>
    <name type="scientific">Pongo abelii</name>
    <name type="common">Sumatran orangutan</name>
    <name type="synonym">Pongo pygmaeus abelii</name>
    <dbReference type="NCBI Taxonomy" id="9601"/>
    <lineage>
        <taxon>Eukaryota</taxon>
        <taxon>Metazoa</taxon>
        <taxon>Chordata</taxon>
        <taxon>Craniata</taxon>
        <taxon>Vertebrata</taxon>
        <taxon>Euteleostomi</taxon>
        <taxon>Mammalia</taxon>
        <taxon>Eutheria</taxon>
        <taxon>Euarchontoglires</taxon>
        <taxon>Primates</taxon>
        <taxon>Haplorrhini</taxon>
        <taxon>Catarrhini</taxon>
        <taxon>Hominidae</taxon>
        <taxon>Pongo</taxon>
    </lineage>
</organism>
<comment type="function">
    <text evidence="1">Part of the small subunit (SSU) processome, first precursor of the small eukaryotic ribosomal subunit. During the assembly of the SSU processome in the nucleolus, many ribosome biogenesis factors, an RNA chaperone and ribosomal proteins associate with the nascent pre-rRNA and work in concert to generate RNA folding, modifications, rearrangements and cleavage as well as targeted degradation of pre-ribosomal RNA by the RNA exosome.</text>
</comment>
<comment type="subunit">
    <text evidence="1">Part of the small subunit (SSU) processome, composed of more than 70 proteins and the RNA chaperone small nucleolar RNA (snoRNA) U3.</text>
</comment>
<comment type="subcellular location">
    <subcellularLocation>
        <location evidence="1">Nucleus</location>
        <location evidence="1">Nucleolus</location>
    </subcellularLocation>
</comment>
<comment type="similarity">
    <text evidence="3">Belongs to the UTP23/FCF1 family. FCF1 subfamily.</text>
</comment>